<name>HEM6_LEGPC</name>
<dbReference type="EC" id="1.3.3.3" evidence="1"/>
<dbReference type="EMBL" id="CP000675">
    <property type="protein sequence ID" value="ABQ54663.1"/>
    <property type="molecule type" value="Genomic_DNA"/>
</dbReference>
<dbReference type="RefSeq" id="WP_011946321.1">
    <property type="nucleotide sequence ID" value="NC_009494.2"/>
</dbReference>
<dbReference type="SMR" id="A5IBB3"/>
<dbReference type="GeneID" id="57035206"/>
<dbReference type="KEGG" id="lpc:LPC_0684"/>
<dbReference type="HOGENOM" id="CLU_026169_0_1_6"/>
<dbReference type="UniPathway" id="UPA00251">
    <property type="reaction ID" value="UER00322"/>
</dbReference>
<dbReference type="GO" id="GO:0005737">
    <property type="term" value="C:cytoplasm"/>
    <property type="evidence" value="ECO:0007669"/>
    <property type="project" value="UniProtKB-SubCell"/>
</dbReference>
<dbReference type="GO" id="GO:0004109">
    <property type="term" value="F:coproporphyrinogen oxidase activity"/>
    <property type="evidence" value="ECO:0007669"/>
    <property type="project" value="UniProtKB-UniRule"/>
</dbReference>
<dbReference type="GO" id="GO:0046872">
    <property type="term" value="F:metal ion binding"/>
    <property type="evidence" value="ECO:0007669"/>
    <property type="project" value="UniProtKB-KW"/>
</dbReference>
<dbReference type="GO" id="GO:0042803">
    <property type="term" value="F:protein homodimerization activity"/>
    <property type="evidence" value="ECO:0000250"/>
    <property type="project" value="UniProtKB"/>
</dbReference>
<dbReference type="GO" id="GO:0006782">
    <property type="term" value="P:protoporphyrinogen IX biosynthetic process"/>
    <property type="evidence" value="ECO:0007669"/>
    <property type="project" value="UniProtKB-UniRule"/>
</dbReference>
<dbReference type="FunFam" id="3.40.1500.10:FF:000001">
    <property type="entry name" value="Oxygen-dependent coproporphyrinogen-III oxidase"/>
    <property type="match status" value="1"/>
</dbReference>
<dbReference type="Gene3D" id="3.40.1500.10">
    <property type="entry name" value="Coproporphyrinogen III oxidase, aerobic"/>
    <property type="match status" value="1"/>
</dbReference>
<dbReference type="HAMAP" id="MF_00333">
    <property type="entry name" value="Coprogen_oxidas"/>
    <property type="match status" value="1"/>
</dbReference>
<dbReference type="InterPro" id="IPR001260">
    <property type="entry name" value="Coprogen_oxidase_aer"/>
</dbReference>
<dbReference type="InterPro" id="IPR036406">
    <property type="entry name" value="Coprogen_oxidase_aer_sf"/>
</dbReference>
<dbReference type="InterPro" id="IPR018375">
    <property type="entry name" value="Coprogen_oxidase_CS"/>
</dbReference>
<dbReference type="NCBIfam" id="NF003727">
    <property type="entry name" value="PRK05330.1"/>
    <property type="match status" value="1"/>
</dbReference>
<dbReference type="PANTHER" id="PTHR10755">
    <property type="entry name" value="COPROPORPHYRINOGEN III OXIDASE, MITOCHONDRIAL"/>
    <property type="match status" value="1"/>
</dbReference>
<dbReference type="PANTHER" id="PTHR10755:SF0">
    <property type="entry name" value="OXYGEN-DEPENDENT COPROPORPHYRINOGEN-III OXIDASE, MITOCHONDRIAL"/>
    <property type="match status" value="1"/>
</dbReference>
<dbReference type="Pfam" id="PF01218">
    <property type="entry name" value="Coprogen_oxidas"/>
    <property type="match status" value="1"/>
</dbReference>
<dbReference type="PIRSF" id="PIRSF000166">
    <property type="entry name" value="Coproporphyri_ox"/>
    <property type="match status" value="1"/>
</dbReference>
<dbReference type="PRINTS" id="PR00073">
    <property type="entry name" value="COPRGNOXDASE"/>
</dbReference>
<dbReference type="SUPFAM" id="SSF102886">
    <property type="entry name" value="Coproporphyrinogen III oxidase"/>
    <property type="match status" value="1"/>
</dbReference>
<dbReference type="PROSITE" id="PS01021">
    <property type="entry name" value="COPROGEN_OXIDASE"/>
    <property type="match status" value="1"/>
</dbReference>
<accession>A5IBB3</accession>
<feature type="chain" id="PRO_1000019472" description="Oxygen-dependent coproporphyrinogen-III oxidase">
    <location>
        <begin position="1"/>
        <end position="311"/>
    </location>
</feature>
<feature type="region of interest" description="Important for dimerization" evidence="1">
    <location>
        <begin position="248"/>
        <end position="283"/>
    </location>
</feature>
<feature type="active site" description="Proton donor" evidence="1">
    <location>
        <position position="114"/>
    </location>
</feature>
<feature type="binding site" evidence="1">
    <location>
        <position position="100"/>
    </location>
    <ligand>
        <name>substrate</name>
    </ligand>
</feature>
<feature type="binding site" evidence="1">
    <location>
        <position position="104"/>
    </location>
    <ligand>
        <name>a divalent metal cation</name>
        <dbReference type="ChEBI" id="CHEBI:60240"/>
    </ligand>
</feature>
<feature type="binding site" evidence="1">
    <location>
        <position position="114"/>
    </location>
    <ligand>
        <name>a divalent metal cation</name>
        <dbReference type="ChEBI" id="CHEBI:60240"/>
    </ligand>
</feature>
<feature type="binding site" evidence="1">
    <location>
        <begin position="116"/>
        <end position="118"/>
    </location>
    <ligand>
        <name>substrate</name>
    </ligand>
</feature>
<feature type="binding site" evidence="1">
    <location>
        <position position="153"/>
    </location>
    <ligand>
        <name>a divalent metal cation</name>
        <dbReference type="ChEBI" id="CHEBI:60240"/>
    </ligand>
</feature>
<feature type="binding site" evidence="1">
    <location>
        <position position="183"/>
    </location>
    <ligand>
        <name>a divalent metal cation</name>
        <dbReference type="ChEBI" id="CHEBI:60240"/>
    </ligand>
</feature>
<feature type="binding site" evidence="1">
    <location>
        <begin position="266"/>
        <end position="268"/>
    </location>
    <ligand>
        <name>substrate</name>
    </ligand>
</feature>
<feature type="site" description="Important for dimerization" evidence="1">
    <location>
        <position position="183"/>
    </location>
</feature>
<comment type="function">
    <text evidence="1">Involved in the heme biosynthesis. Catalyzes the aerobic oxidative decarboxylation of propionate groups of rings A and B of coproporphyrinogen-III to yield the vinyl groups in protoporphyrinogen-IX.</text>
</comment>
<comment type="catalytic activity">
    <reaction evidence="1">
        <text>coproporphyrinogen III + O2 + 2 H(+) = protoporphyrinogen IX + 2 CO2 + 2 H2O</text>
        <dbReference type="Rhea" id="RHEA:18257"/>
        <dbReference type="ChEBI" id="CHEBI:15377"/>
        <dbReference type="ChEBI" id="CHEBI:15378"/>
        <dbReference type="ChEBI" id="CHEBI:15379"/>
        <dbReference type="ChEBI" id="CHEBI:16526"/>
        <dbReference type="ChEBI" id="CHEBI:57307"/>
        <dbReference type="ChEBI" id="CHEBI:57309"/>
        <dbReference type="EC" id="1.3.3.3"/>
    </reaction>
</comment>
<comment type="cofactor">
    <cofactor evidence="1">
        <name>a divalent metal cation</name>
        <dbReference type="ChEBI" id="CHEBI:60240"/>
    </cofactor>
</comment>
<comment type="pathway">
    <text evidence="1">Porphyrin-containing compound metabolism; protoporphyrin-IX biosynthesis; protoporphyrinogen-IX from coproporphyrinogen-III (O2 route): step 1/1.</text>
</comment>
<comment type="subunit">
    <text evidence="1">Homodimer.</text>
</comment>
<comment type="subcellular location">
    <subcellularLocation>
        <location evidence="1">Cytoplasm</location>
    </subcellularLocation>
</comment>
<comment type="similarity">
    <text evidence="1">Belongs to the aerobic coproporphyrinogen-III oxidase family.</text>
</comment>
<keyword id="KW-0963">Cytoplasm</keyword>
<keyword id="KW-0350">Heme biosynthesis</keyword>
<keyword id="KW-0479">Metal-binding</keyword>
<keyword id="KW-0560">Oxidoreductase</keyword>
<keyword id="KW-0627">Porphyrin biosynthesis</keyword>
<reference key="1">
    <citation type="submission" date="2006-11" db="EMBL/GenBank/DDBJ databases">
        <title>Identification and characterization of a new conjugation/ type IVA secretion system (trb/tra) of L. pneumophila Corby localized on a mobile genomic island.</title>
        <authorList>
            <person name="Gloeckner G."/>
            <person name="Albert-Weissenberger C."/>
            <person name="Weinmann E."/>
            <person name="Jacobi S."/>
            <person name="Schunder E."/>
            <person name="Steinert M."/>
            <person name="Buchrieser C."/>
            <person name="Hacker J."/>
            <person name="Heuner K."/>
        </authorList>
    </citation>
    <scope>NUCLEOTIDE SEQUENCE [LARGE SCALE GENOMIC DNA]</scope>
    <source>
        <strain>Corby</strain>
    </source>
</reference>
<organism>
    <name type="scientific">Legionella pneumophila (strain Corby)</name>
    <dbReference type="NCBI Taxonomy" id="400673"/>
    <lineage>
        <taxon>Bacteria</taxon>
        <taxon>Pseudomonadati</taxon>
        <taxon>Pseudomonadota</taxon>
        <taxon>Gammaproteobacteria</taxon>
        <taxon>Legionellales</taxon>
        <taxon>Legionellaceae</taxon>
        <taxon>Legionella</taxon>
    </lineage>
</organism>
<evidence type="ECO:0000255" key="1">
    <source>
        <dbReference type="HAMAP-Rule" id="MF_00333"/>
    </source>
</evidence>
<protein>
    <recommendedName>
        <fullName evidence="1">Oxygen-dependent coproporphyrinogen-III oxidase</fullName>
        <shortName evidence="1">CPO</shortName>
        <shortName evidence="1">Coprogen oxidase</shortName>
        <shortName evidence="1">Coproporphyrinogenase</shortName>
        <ecNumber evidence="1">1.3.3.3</ecNumber>
    </recommendedName>
</protein>
<proteinExistence type="inferred from homology"/>
<gene>
    <name evidence="1" type="primary">hemF</name>
    <name type="ordered locus">LPC_0684</name>
</gene>
<sequence>MPISKTLPYNAIEQIKSYLLQLQNTICVSLESIDGKTRFHEDSWQRAAGGGGKTRIMANGNVFEKAGVNFSHVSGEQLPASASAHREELAGRHFSALGVSLVIHPQNPYVPTTHANVRFFVAEKEDSEPVWWFGGGFDLTPYYGFVEDCEHWHQTALNACLPFGETIYPKFKRWCDDYFFIKHRNEARGIGGLFFDDYNEISFDHSFELMRSIGDHFILAYEPIVARRKDIPFGNREKAFQNYRRGRYAEFNLVYDRGTLFGLQSGGRTESILMSLPPIVHWEYNWHPEKGSDEEKLYTDFLPAKDWLKKE</sequence>